<name>MOAC_BACC3</name>
<accession>C1EVZ1</accession>
<dbReference type="EC" id="4.6.1.17" evidence="1"/>
<dbReference type="EMBL" id="CP001407">
    <property type="protein sequence ID" value="ACO26259.1"/>
    <property type="molecule type" value="Genomic_DNA"/>
</dbReference>
<dbReference type="RefSeq" id="WP_000094141.1">
    <property type="nucleotide sequence ID" value="NZ_CP009318.1"/>
</dbReference>
<dbReference type="SMR" id="C1EVZ1"/>
<dbReference type="GeneID" id="45024593"/>
<dbReference type="KEGG" id="bcx:BCA_4846"/>
<dbReference type="PATRIC" id="fig|572264.18.peg.4796"/>
<dbReference type="UniPathway" id="UPA00344"/>
<dbReference type="Proteomes" id="UP000002210">
    <property type="component" value="Chromosome"/>
</dbReference>
<dbReference type="GO" id="GO:0061799">
    <property type="term" value="F:cyclic pyranopterin monophosphate synthase activity"/>
    <property type="evidence" value="ECO:0007669"/>
    <property type="project" value="UniProtKB-UniRule"/>
</dbReference>
<dbReference type="GO" id="GO:0006777">
    <property type="term" value="P:Mo-molybdopterin cofactor biosynthetic process"/>
    <property type="evidence" value="ECO:0007669"/>
    <property type="project" value="UniProtKB-UniRule"/>
</dbReference>
<dbReference type="CDD" id="cd01420">
    <property type="entry name" value="MoaC_PE"/>
    <property type="match status" value="1"/>
</dbReference>
<dbReference type="Gene3D" id="3.30.70.640">
    <property type="entry name" value="Molybdopterin cofactor biosynthesis C (MoaC) domain"/>
    <property type="match status" value="1"/>
</dbReference>
<dbReference type="HAMAP" id="MF_01224_B">
    <property type="entry name" value="MoaC_B"/>
    <property type="match status" value="1"/>
</dbReference>
<dbReference type="InterPro" id="IPR023045">
    <property type="entry name" value="MoaC"/>
</dbReference>
<dbReference type="InterPro" id="IPR047594">
    <property type="entry name" value="MoaC_bact/euk"/>
</dbReference>
<dbReference type="InterPro" id="IPR036522">
    <property type="entry name" value="MoaC_sf"/>
</dbReference>
<dbReference type="InterPro" id="IPR050105">
    <property type="entry name" value="MoCo_biosynth_MoaA/MoaC"/>
</dbReference>
<dbReference type="InterPro" id="IPR002820">
    <property type="entry name" value="Mopterin_CF_biosynth-C_dom"/>
</dbReference>
<dbReference type="NCBIfam" id="TIGR00581">
    <property type="entry name" value="moaC"/>
    <property type="match status" value="1"/>
</dbReference>
<dbReference type="NCBIfam" id="NF006870">
    <property type="entry name" value="PRK09364.1"/>
    <property type="match status" value="1"/>
</dbReference>
<dbReference type="PANTHER" id="PTHR22960:SF29">
    <property type="entry name" value="CYCLIC PYRANOPTERIN MONOPHOSPHATE SYNTHASE"/>
    <property type="match status" value="1"/>
</dbReference>
<dbReference type="PANTHER" id="PTHR22960">
    <property type="entry name" value="MOLYBDOPTERIN COFACTOR SYNTHESIS PROTEIN A"/>
    <property type="match status" value="1"/>
</dbReference>
<dbReference type="Pfam" id="PF01967">
    <property type="entry name" value="MoaC"/>
    <property type="match status" value="1"/>
</dbReference>
<dbReference type="SUPFAM" id="SSF55040">
    <property type="entry name" value="Molybdenum cofactor biosynthesis protein C, MoaC"/>
    <property type="match status" value="1"/>
</dbReference>
<comment type="function">
    <text evidence="1">Catalyzes the conversion of (8S)-3',8-cyclo-7,8-dihydroguanosine 5'-triphosphate to cyclic pyranopterin monophosphate (cPMP).</text>
</comment>
<comment type="catalytic activity">
    <reaction evidence="1">
        <text>(8S)-3',8-cyclo-7,8-dihydroguanosine 5'-triphosphate = cyclic pyranopterin phosphate + diphosphate</text>
        <dbReference type="Rhea" id="RHEA:49580"/>
        <dbReference type="ChEBI" id="CHEBI:33019"/>
        <dbReference type="ChEBI" id="CHEBI:59648"/>
        <dbReference type="ChEBI" id="CHEBI:131766"/>
        <dbReference type="EC" id="4.6.1.17"/>
    </reaction>
</comment>
<comment type="pathway">
    <text evidence="1">Cofactor biosynthesis; molybdopterin biosynthesis.</text>
</comment>
<comment type="subunit">
    <text evidence="1">Homohexamer; trimer of dimers.</text>
</comment>
<comment type="similarity">
    <text evidence="1">Belongs to the MoaC family.</text>
</comment>
<reference key="1">
    <citation type="submission" date="2009-02" db="EMBL/GenBank/DDBJ databases">
        <title>Genome sequence of Bacillus cereus 03BB102.</title>
        <authorList>
            <person name="Dodson R.J."/>
            <person name="Jackson P."/>
            <person name="Munk A.C."/>
            <person name="Brettin T."/>
            <person name="Bruce D."/>
            <person name="Detter C."/>
            <person name="Tapia R."/>
            <person name="Han C."/>
            <person name="Sutton G."/>
            <person name="Sims D."/>
        </authorList>
    </citation>
    <scope>NUCLEOTIDE SEQUENCE [LARGE SCALE GENOMIC DNA]</scope>
    <source>
        <strain>03BB102</strain>
    </source>
</reference>
<feature type="chain" id="PRO_1000164878" description="Cyclic pyranopterin monophosphate synthase">
    <location>
        <begin position="1"/>
        <end position="161"/>
    </location>
</feature>
<feature type="active site" evidence="1">
    <location>
        <position position="130"/>
    </location>
</feature>
<feature type="binding site" evidence="1">
    <location>
        <begin position="75"/>
        <end position="77"/>
    </location>
    <ligand>
        <name>substrate</name>
    </ligand>
</feature>
<feature type="binding site" evidence="1">
    <location>
        <begin position="115"/>
        <end position="116"/>
    </location>
    <ligand>
        <name>substrate</name>
    </ligand>
</feature>
<keyword id="KW-0456">Lyase</keyword>
<keyword id="KW-0501">Molybdenum cofactor biosynthesis</keyword>
<evidence type="ECO:0000255" key="1">
    <source>
        <dbReference type="HAMAP-Rule" id="MF_01224"/>
    </source>
</evidence>
<sequence>MSSFTHFNDQGRAKMVDISDKKATVRTAIACSSIVVTKEIYDKISHNEIGKGDVLAVAQIAGIMAAKRTSDIIPMCHPLLLKGVDVSFDWKQSDEQYRLLIEVKVKTEGSTGVEMEALTAASATALTVYDMCKAVDKGMIIGETYLLEKTGGKSGDYTRKS</sequence>
<protein>
    <recommendedName>
        <fullName evidence="1">Cyclic pyranopterin monophosphate synthase</fullName>
        <ecNumber evidence="1">4.6.1.17</ecNumber>
    </recommendedName>
    <alternativeName>
        <fullName evidence="1">Molybdenum cofactor biosynthesis protein C</fullName>
    </alternativeName>
</protein>
<organism>
    <name type="scientific">Bacillus cereus (strain 03BB102)</name>
    <dbReference type="NCBI Taxonomy" id="572264"/>
    <lineage>
        <taxon>Bacteria</taxon>
        <taxon>Bacillati</taxon>
        <taxon>Bacillota</taxon>
        <taxon>Bacilli</taxon>
        <taxon>Bacillales</taxon>
        <taxon>Bacillaceae</taxon>
        <taxon>Bacillus</taxon>
        <taxon>Bacillus cereus group</taxon>
    </lineage>
</organism>
<proteinExistence type="inferred from homology"/>
<gene>
    <name evidence="1" type="primary">moaC</name>
    <name type="ordered locus">BCA_4846</name>
</gene>